<keyword id="KW-0010">Activator</keyword>
<keyword id="KW-0067">ATP-binding</keyword>
<keyword id="KW-0238">DNA-binding</keyword>
<keyword id="KW-0347">Helicase</keyword>
<keyword id="KW-0378">Hydrolase</keyword>
<keyword id="KW-0547">Nucleotide-binding</keyword>
<keyword id="KW-0804">Transcription</keyword>
<keyword id="KW-0805">Transcription regulation</keyword>
<evidence type="ECO:0000255" key="1">
    <source>
        <dbReference type="HAMAP-Rule" id="MF_01821"/>
    </source>
</evidence>
<name>RAPA_ACTP7</name>
<organism>
    <name type="scientific">Actinobacillus pleuropneumoniae serotype 7 (strain AP76)</name>
    <dbReference type="NCBI Taxonomy" id="537457"/>
    <lineage>
        <taxon>Bacteria</taxon>
        <taxon>Pseudomonadati</taxon>
        <taxon>Pseudomonadota</taxon>
        <taxon>Gammaproteobacteria</taxon>
        <taxon>Pasteurellales</taxon>
        <taxon>Pasteurellaceae</taxon>
        <taxon>Actinobacillus</taxon>
    </lineage>
</organism>
<proteinExistence type="inferred from homology"/>
<reference key="1">
    <citation type="submission" date="2008-06" db="EMBL/GenBank/DDBJ databases">
        <title>Genome and proteome analysis of A. pleuropneumoniae serotype 7.</title>
        <authorList>
            <person name="Linke B."/>
            <person name="Buettner F."/>
            <person name="Martinez-Arias R."/>
            <person name="Goesmann A."/>
            <person name="Baltes N."/>
            <person name="Tegetmeyer H."/>
            <person name="Singh M."/>
            <person name="Gerlach G.F."/>
        </authorList>
    </citation>
    <scope>NUCLEOTIDE SEQUENCE [LARGE SCALE GENOMIC DNA]</scope>
    <source>
        <strain>AP76</strain>
    </source>
</reference>
<accession>B3H0F9</accession>
<comment type="function">
    <text evidence="1">Transcription regulator that activates transcription by stimulating RNA polymerase (RNAP) recycling in case of stress conditions such as supercoiled DNA or high salt concentrations. Probably acts by releasing the RNAP, when it is trapped or immobilized on tightly supercoiled DNA. Does not activate transcription on linear DNA. Probably not involved in DNA repair.</text>
</comment>
<comment type="subunit">
    <text evidence="1">Interacts with the RNAP. Has a higher affinity for the core RNAP than for the holoenzyme. Its ATPase activity is stimulated by binding to RNAP.</text>
</comment>
<comment type="similarity">
    <text evidence="1">Belongs to the SNF2/RAD54 helicase family. RapA subfamily.</text>
</comment>
<sequence length="969" mass="109717">MFVVGQRWISESENNLGLGIVTASDNRTVTIQFPAAEEERIYALSVAPLTRVQFQKGDRINSVEGWQLDVEEVVENQGFIIYLGKRADSGEEAVLPEMQLDHKVSFSKPQDRLFSAQIDRSDRFALRYRALQHQQAQFQSPLRGMRGIRASLIPHQLHIAKEVGQRVAPRVLLADEVGLGKTIEAGMILQQQLFSGRVERVLVLVPESLQHQWLVEMLRRFNLKFSLFDEERCSDFDKADEDGNDVSENPFDSEALVIASIDWLESSPNRAKQVLASHWDMLIVDEAHHLAWSEDEPSVGYQFVERLSKQTPAVLLLTATPEQLGQESHFARLALLDADRFYDYHSFIAEQKDYKPVADAVATLLNDKPLSHDEQNSIAELLSEKDTEPMFKVINSEKSKENDRLQVRQELIRELIDRHGTSRVLFRNTRQGVKGFPHRVYHQITLEMPSQYTNALKVMGMMGGVTKDDQLYPERLFQRMNPAAKWADFDPRIEWLITFLKNHRDEKILVICKQADTAIALEQILREREAIRSAVFHEKMSIVERDRASAYFAQMEEGAQVLISSSIGSEGRNFQFASNLVLFNLPDNPDLLEQSIGRLDRIGQKNDIQIHVPCFENSMQMVLATWYHQGLNAFEETCPMGAALFREFGEELEGFLKNPQAVGFDEFLVRTFKRQQQLKAELEQGRDRLLELNSNGGEVAQALAEAIAKEDNNPHLVNFALSLFDVIGLEQEDLGEQSIVISPTGHMLVPDFPGIAEDGTTVTFDRQLALMREDVEFLTWDHPMIRNGIDLITSGYIGKSAISLLINKNLPAGTLLLEAIYMVETQAPKGLNLTRFLPPTPVRILLDNKGNDMAAQVSFAGLEKQLKPLNKQMANKIAKMAQADIKKLIGISEQKIAAKLPELIEKASQDADSTLSAELHRLTSLQAVNKNIRSDEIEALEQQRIESLKQIALANWRLDSLRVIVSNKE</sequence>
<dbReference type="EC" id="3.6.4.-" evidence="1"/>
<dbReference type="EMBL" id="CP001091">
    <property type="protein sequence ID" value="ACE60971.1"/>
    <property type="molecule type" value="Genomic_DNA"/>
</dbReference>
<dbReference type="RefSeq" id="WP_005616776.1">
    <property type="nucleotide sequence ID" value="NC_010939.1"/>
</dbReference>
<dbReference type="SMR" id="B3H0F9"/>
<dbReference type="KEGG" id="apa:APP7_0319"/>
<dbReference type="HOGENOM" id="CLU_011520_0_0_6"/>
<dbReference type="Proteomes" id="UP000001226">
    <property type="component" value="Chromosome"/>
</dbReference>
<dbReference type="GO" id="GO:0005524">
    <property type="term" value="F:ATP binding"/>
    <property type="evidence" value="ECO:0007669"/>
    <property type="project" value="UniProtKB-UniRule"/>
</dbReference>
<dbReference type="GO" id="GO:0003677">
    <property type="term" value="F:DNA binding"/>
    <property type="evidence" value="ECO:0007669"/>
    <property type="project" value="UniProtKB-KW"/>
</dbReference>
<dbReference type="GO" id="GO:0004386">
    <property type="term" value="F:helicase activity"/>
    <property type="evidence" value="ECO:0007669"/>
    <property type="project" value="UniProtKB-UniRule"/>
</dbReference>
<dbReference type="GO" id="GO:0016817">
    <property type="term" value="F:hydrolase activity, acting on acid anhydrides"/>
    <property type="evidence" value="ECO:0007669"/>
    <property type="project" value="InterPro"/>
</dbReference>
<dbReference type="GO" id="GO:0006355">
    <property type="term" value="P:regulation of DNA-templated transcription"/>
    <property type="evidence" value="ECO:0007669"/>
    <property type="project" value="UniProtKB-UniRule"/>
</dbReference>
<dbReference type="CDD" id="cd18011">
    <property type="entry name" value="DEXDc_RapA"/>
    <property type="match status" value="1"/>
</dbReference>
<dbReference type="CDD" id="cd18793">
    <property type="entry name" value="SF2_C_SNF"/>
    <property type="match status" value="1"/>
</dbReference>
<dbReference type="Gene3D" id="2.30.30.140">
    <property type="match status" value="1"/>
</dbReference>
<dbReference type="Gene3D" id="2.30.30.930">
    <property type="match status" value="1"/>
</dbReference>
<dbReference type="Gene3D" id="3.30.360.80">
    <property type="match status" value="1"/>
</dbReference>
<dbReference type="Gene3D" id="6.10.140.1500">
    <property type="match status" value="1"/>
</dbReference>
<dbReference type="Gene3D" id="6.10.140.2230">
    <property type="match status" value="1"/>
</dbReference>
<dbReference type="Gene3D" id="3.40.50.300">
    <property type="entry name" value="P-loop containing nucleotide triphosphate hydrolases"/>
    <property type="match status" value="1"/>
</dbReference>
<dbReference type="Gene3D" id="3.40.50.10810">
    <property type="entry name" value="Tandem AAA-ATPase domain"/>
    <property type="match status" value="1"/>
</dbReference>
<dbReference type="HAMAP" id="MF_01821">
    <property type="entry name" value="Helicase_RapA"/>
    <property type="match status" value="1"/>
</dbReference>
<dbReference type="InterPro" id="IPR014001">
    <property type="entry name" value="Helicase_ATP-bd"/>
</dbReference>
<dbReference type="InterPro" id="IPR001650">
    <property type="entry name" value="Helicase_C-like"/>
</dbReference>
<dbReference type="InterPro" id="IPR023949">
    <property type="entry name" value="Helicase_RapA"/>
</dbReference>
<dbReference type="InterPro" id="IPR027417">
    <property type="entry name" value="P-loop_NTPase"/>
</dbReference>
<dbReference type="InterPro" id="IPR022737">
    <property type="entry name" value="RapA_C"/>
</dbReference>
<dbReference type="InterPro" id="IPR038718">
    <property type="entry name" value="SNF2-like_sf"/>
</dbReference>
<dbReference type="InterPro" id="IPR049730">
    <property type="entry name" value="SNF2/RAD54-like_C"/>
</dbReference>
<dbReference type="InterPro" id="IPR000330">
    <property type="entry name" value="SNF2_N"/>
</dbReference>
<dbReference type="InterPro" id="IPR040765">
    <property type="entry name" value="Tudor_1_RapA"/>
</dbReference>
<dbReference type="InterPro" id="IPR040766">
    <property type="entry name" value="Tudor_2_RapA"/>
</dbReference>
<dbReference type="NCBIfam" id="NF003426">
    <property type="entry name" value="PRK04914.1"/>
    <property type="match status" value="1"/>
</dbReference>
<dbReference type="PANTHER" id="PTHR45766">
    <property type="entry name" value="DNA ANNEALING HELICASE AND ENDONUCLEASE ZRANB3 FAMILY MEMBER"/>
    <property type="match status" value="1"/>
</dbReference>
<dbReference type="PANTHER" id="PTHR45766:SF6">
    <property type="entry name" value="SWI_SNF-RELATED MATRIX-ASSOCIATED ACTIN-DEPENDENT REGULATOR OF CHROMATIN SUBFAMILY A-LIKE PROTEIN 1"/>
    <property type="match status" value="1"/>
</dbReference>
<dbReference type="Pfam" id="PF00271">
    <property type="entry name" value="Helicase_C"/>
    <property type="match status" value="1"/>
</dbReference>
<dbReference type="Pfam" id="PF12137">
    <property type="entry name" value="RapA_C"/>
    <property type="match status" value="1"/>
</dbReference>
<dbReference type="Pfam" id="PF00176">
    <property type="entry name" value="SNF2-rel_dom"/>
    <property type="match status" value="1"/>
</dbReference>
<dbReference type="Pfam" id="PF18339">
    <property type="entry name" value="Tudor_1_RapA"/>
    <property type="match status" value="1"/>
</dbReference>
<dbReference type="Pfam" id="PF18337">
    <property type="entry name" value="Tudor_RapA"/>
    <property type="match status" value="1"/>
</dbReference>
<dbReference type="SMART" id="SM00487">
    <property type="entry name" value="DEXDc"/>
    <property type="match status" value="1"/>
</dbReference>
<dbReference type="SMART" id="SM00490">
    <property type="entry name" value="HELICc"/>
    <property type="match status" value="1"/>
</dbReference>
<dbReference type="SUPFAM" id="SSF52540">
    <property type="entry name" value="P-loop containing nucleoside triphosphate hydrolases"/>
    <property type="match status" value="2"/>
</dbReference>
<dbReference type="PROSITE" id="PS51192">
    <property type="entry name" value="HELICASE_ATP_BIND_1"/>
    <property type="match status" value="1"/>
</dbReference>
<dbReference type="PROSITE" id="PS51194">
    <property type="entry name" value="HELICASE_CTER"/>
    <property type="match status" value="1"/>
</dbReference>
<feature type="chain" id="PRO_1000188165" description="RNA polymerase-associated protein RapA">
    <location>
        <begin position="1"/>
        <end position="969"/>
    </location>
</feature>
<feature type="domain" description="Helicase ATP-binding" evidence="1">
    <location>
        <begin position="162"/>
        <end position="339"/>
    </location>
</feature>
<feature type="domain" description="Helicase C-terminal" evidence="1">
    <location>
        <begin position="492"/>
        <end position="663"/>
    </location>
</feature>
<feature type="short sequence motif" description="DEAH box">
    <location>
        <begin position="285"/>
        <end position="288"/>
    </location>
</feature>
<feature type="binding site" evidence="1">
    <location>
        <begin position="175"/>
        <end position="182"/>
    </location>
    <ligand>
        <name>ATP</name>
        <dbReference type="ChEBI" id="CHEBI:30616"/>
    </ligand>
</feature>
<gene>
    <name evidence="1" type="primary">rapA</name>
    <name type="ordered locus">APP7_0319</name>
</gene>
<protein>
    <recommendedName>
        <fullName evidence="1">RNA polymerase-associated protein RapA</fullName>
        <ecNumber evidence="1">3.6.4.-</ecNumber>
    </recommendedName>
    <alternativeName>
        <fullName evidence="1">ATP-dependent helicase HepA</fullName>
    </alternativeName>
</protein>